<name>LPXC_THISH</name>
<dbReference type="EC" id="3.5.1.108" evidence="1"/>
<dbReference type="EMBL" id="CP001339">
    <property type="protein sequence ID" value="ACL71868.1"/>
    <property type="molecule type" value="Genomic_DNA"/>
</dbReference>
<dbReference type="RefSeq" id="WP_012637356.1">
    <property type="nucleotide sequence ID" value="NC_011901.1"/>
</dbReference>
<dbReference type="SMR" id="B8GMN6"/>
<dbReference type="STRING" id="396588.Tgr7_0776"/>
<dbReference type="KEGG" id="tgr:Tgr7_0776"/>
<dbReference type="eggNOG" id="COG0774">
    <property type="taxonomic scope" value="Bacteria"/>
</dbReference>
<dbReference type="HOGENOM" id="CLU_046528_1_0_6"/>
<dbReference type="OrthoDB" id="9802746at2"/>
<dbReference type="UniPathway" id="UPA00359">
    <property type="reaction ID" value="UER00478"/>
</dbReference>
<dbReference type="Proteomes" id="UP000002383">
    <property type="component" value="Chromosome"/>
</dbReference>
<dbReference type="GO" id="GO:0016020">
    <property type="term" value="C:membrane"/>
    <property type="evidence" value="ECO:0007669"/>
    <property type="project" value="GOC"/>
</dbReference>
<dbReference type="GO" id="GO:0046872">
    <property type="term" value="F:metal ion binding"/>
    <property type="evidence" value="ECO:0007669"/>
    <property type="project" value="UniProtKB-KW"/>
</dbReference>
<dbReference type="GO" id="GO:0103117">
    <property type="term" value="F:UDP-3-O-acyl-N-acetylglucosamine deacetylase activity"/>
    <property type="evidence" value="ECO:0007669"/>
    <property type="project" value="UniProtKB-UniRule"/>
</dbReference>
<dbReference type="GO" id="GO:0009245">
    <property type="term" value="P:lipid A biosynthetic process"/>
    <property type="evidence" value="ECO:0007669"/>
    <property type="project" value="UniProtKB-UniRule"/>
</dbReference>
<dbReference type="Gene3D" id="3.30.230.20">
    <property type="entry name" value="lpxc deacetylase, domain 1"/>
    <property type="match status" value="1"/>
</dbReference>
<dbReference type="Gene3D" id="3.30.1700.10">
    <property type="entry name" value="lpxc deacetylase, domain 2"/>
    <property type="match status" value="1"/>
</dbReference>
<dbReference type="HAMAP" id="MF_00388">
    <property type="entry name" value="LpxC"/>
    <property type="match status" value="1"/>
</dbReference>
<dbReference type="InterPro" id="IPR020568">
    <property type="entry name" value="Ribosomal_Su5_D2-typ_SF"/>
</dbReference>
<dbReference type="InterPro" id="IPR004463">
    <property type="entry name" value="UDP-acyl_GlcNac_deAcase"/>
</dbReference>
<dbReference type="InterPro" id="IPR011334">
    <property type="entry name" value="UDP-acyl_GlcNac_deAcase_C"/>
</dbReference>
<dbReference type="InterPro" id="IPR015870">
    <property type="entry name" value="UDP-acyl_N-AcGlcN_deAcase_N"/>
</dbReference>
<dbReference type="NCBIfam" id="TIGR00325">
    <property type="entry name" value="lpxC"/>
    <property type="match status" value="1"/>
</dbReference>
<dbReference type="PANTHER" id="PTHR33694">
    <property type="entry name" value="UDP-3-O-ACYL-N-ACETYLGLUCOSAMINE DEACETYLASE 1, MITOCHONDRIAL-RELATED"/>
    <property type="match status" value="1"/>
</dbReference>
<dbReference type="PANTHER" id="PTHR33694:SF1">
    <property type="entry name" value="UDP-3-O-ACYL-N-ACETYLGLUCOSAMINE DEACETYLASE 1, MITOCHONDRIAL-RELATED"/>
    <property type="match status" value="1"/>
</dbReference>
<dbReference type="Pfam" id="PF03331">
    <property type="entry name" value="LpxC"/>
    <property type="match status" value="1"/>
</dbReference>
<dbReference type="SUPFAM" id="SSF54211">
    <property type="entry name" value="Ribosomal protein S5 domain 2-like"/>
    <property type="match status" value="2"/>
</dbReference>
<sequence length="304" mass="33854">MIRQRTLKNTIRATGVGLHTGEKVYVMLRPAPVDTGVVFRRMDLEPPVEIKASPDNVGDTRLSTTLVNGEVRVSTVEHLLSAIAGLGIDNLYVEVSAAEVPIMDGSAGPFVFLIQSAGIVEQEAPKKFIRIKRAVEVREDDKWARFEPFDGFKVGFSIDFQHPIFSNGVQTAELDFSTTSFVKEVSRARTFGFMRDIEMLRERQLALGGSLDNAIVLDDFRILNEDGLRYEDEFVKHKILDAIGDLYLLGHSLVGAFTGFKSGHALNNRLIRTLIAQEDAWECITFEDENESAPISYAQPVTAF</sequence>
<gene>
    <name evidence="1" type="primary">lpxC</name>
    <name type="ordered locus">Tgr7_0776</name>
</gene>
<feature type="chain" id="PRO_1000134403" description="UDP-3-O-acyl-N-acetylglucosamine deacetylase">
    <location>
        <begin position="1"/>
        <end position="304"/>
    </location>
</feature>
<feature type="active site" description="Proton donor" evidence="1">
    <location>
        <position position="264"/>
    </location>
</feature>
<feature type="binding site" evidence="1">
    <location>
        <position position="78"/>
    </location>
    <ligand>
        <name>Zn(2+)</name>
        <dbReference type="ChEBI" id="CHEBI:29105"/>
    </ligand>
</feature>
<feature type="binding site" evidence="1">
    <location>
        <position position="237"/>
    </location>
    <ligand>
        <name>Zn(2+)</name>
        <dbReference type="ChEBI" id="CHEBI:29105"/>
    </ligand>
</feature>
<feature type="binding site" evidence="1">
    <location>
        <position position="241"/>
    </location>
    <ligand>
        <name>Zn(2+)</name>
        <dbReference type="ChEBI" id="CHEBI:29105"/>
    </ligand>
</feature>
<evidence type="ECO:0000255" key="1">
    <source>
        <dbReference type="HAMAP-Rule" id="MF_00388"/>
    </source>
</evidence>
<proteinExistence type="inferred from homology"/>
<protein>
    <recommendedName>
        <fullName evidence="1">UDP-3-O-acyl-N-acetylglucosamine deacetylase</fullName>
        <shortName evidence="1">UDP-3-O-acyl-GlcNAc deacetylase</shortName>
        <ecNumber evidence="1">3.5.1.108</ecNumber>
    </recommendedName>
    <alternativeName>
        <fullName evidence="1">UDP-3-O-[R-3-hydroxymyristoyl]-N-acetylglucosamine deacetylase</fullName>
    </alternativeName>
</protein>
<comment type="function">
    <text evidence="1">Catalyzes the hydrolysis of UDP-3-O-myristoyl-N-acetylglucosamine to form UDP-3-O-myristoylglucosamine and acetate, the committed step in lipid A biosynthesis.</text>
</comment>
<comment type="catalytic activity">
    <reaction evidence="1">
        <text>a UDP-3-O-[(3R)-3-hydroxyacyl]-N-acetyl-alpha-D-glucosamine + H2O = a UDP-3-O-[(3R)-3-hydroxyacyl]-alpha-D-glucosamine + acetate</text>
        <dbReference type="Rhea" id="RHEA:67816"/>
        <dbReference type="ChEBI" id="CHEBI:15377"/>
        <dbReference type="ChEBI" id="CHEBI:30089"/>
        <dbReference type="ChEBI" id="CHEBI:137740"/>
        <dbReference type="ChEBI" id="CHEBI:173225"/>
        <dbReference type="EC" id="3.5.1.108"/>
    </reaction>
</comment>
<comment type="cofactor">
    <cofactor evidence="1">
        <name>Zn(2+)</name>
        <dbReference type="ChEBI" id="CHEBI:29105"/>
    </cofactor>
</comment>
<comment type="pathway">
    <text evidence="1">Glycolipid biosynthesis; lipid IV(A) biosynthesis; lipid IV(A) from (3R)-3-hydroxytetradecanoyl-[acyl-carrier-protein] and UDP-N-acetyl-alpha-D-glucosamine: step 2/6.</text>
</comment>
<comment type="similarity">
    <text evidence="1">Belongs to the LpxC family.</text>
</comment>
<keyword id="KW-0378">Hydrolase</keyword>
<keyword id="KW-0441">Lipid A biosynthesis</keyword>
<keyword id="KW-0444">Lipid biosynthesis</keyword>
<keyword id="KW-0443">Lipid metabolism</keyword>
<keyword id="KW-0479">Metal-binding</keyword>
<keyword id="KW-1185">Reference proteome</keyword>
<keyword id="KW-0862">Zinc</keyword>
<reference key="1">
    <citation type="journal article" date="2011" name="Stand. Genomic Sci.">
        <title>Complete genome sequence of 'Thioalkalivibrio sulfidophilus' HL-EbGr7.</title>
        <authorList>
            <person name="Muyzer G."/>
            <person name="Sorokin D.Y."/>
            <person name="Mavromatis K."/>
            <person name="Lapidus A."/>
            <person name="Clum A."/>
            <person name="Ivanova N."/>
            <person name="Pati A."/>
            <person name="d'Haeseleer P."/>
            <person name="Woyke T."/>
            <person name="Kyrpides N.C."/>
        </authorList>
    </citation>
    <scope>NUCLEOTIDE SEQUENCE [LARGE SCALE GENOMIC DNA]</scope>
    <source>
        <strain>HL-EbGR7</strain>
    </source>
</reference>
<organism>
    <name type="scientific">Thioalkalivibrio sulfidiphilus (strain HL-EbGR7)</name>
    <dbReference type="NCBI Taxonomy" id="396588"/>
    <lineage>
        <taxon>Bacteria</taxon>
        <taxon>Pseudomonadati</taxon>
        <taxon>Pseudomonadota</taxon>
        <taxon>Gammaproteobacteria</taxon>
        <taxon>Chromatiales</taxon>
        <taxon>Ectothiorhodospiraceae</taxon>
        <taxon>Thioalkalivibrio</taxon>
    </lineage>
</organism>
<accession>B8GMN6</accession>